<organism>
    <name type="scientific">Chlorobaculum tepidum (strain ATCC 49652 / DSM 12025 / NBRC 103806 / TLS)</name>
    <name type="common">Chlorobium tepidum</name>
    <dbReference type="NCBI Taxonomy" id="194439"/>
    <lineage>
        <taxon>Bacteria</taxon>
        <taxon>Pseudomonadati</taxon>
        <taxon>Chlorobiota</taxon>
        <taxon>Chlorobiia</taxon>
        <taxon>Chlorobiales</taxon>
        <taxon>Chlorobiaceae</taxon>
        <taxon>Chlorobaculum</taxon>
    </lineage>
</organism>
<reference key="1">
    <citation type="journal article" date="2002" name="Proc. Natl. Acad. Sci. U.S.A.">
        <title>The complete genome sequence of Chlorobium tepidum TLS, a photosynthetic, anaerobic, green-sulfur bacterium.</title>
        <authorList>
            <person name="Eisen J.A."/>
            <person name="Nelson K.E."/>
            <person name="Paulsen I.T."/>
            <person name="Heidelberg J.F."/>
            <person name="Wu M."/>
            <person name="Dodson R.J."/>
            <person name="DeBoy R.T."/>
            <person name="Gwinn M.L."/>
            <person name="Nelson W.C."/>
            <person name="Haft D.H."/>
            <person name="Hickey E.K."/>
            <person name="Peterson J.D."/>
            <person name="Durkin A.S."/>
            <person name="Kolonay J.F."/>
            <person name="Yang F."/>
            <person name="Holt I.E."/>
            <person name="Umayam L.A."/>
            <person name="Mason T.M."/>
            <person name="Brenner M."/>
            <person name="Shea T.P."/>
            <person name="Parksey D.S."/>
            <person name="Nierman W.C."/>
            <person name="Feldblyum T.V."/>
            <person name="Hansen C.L."/>
            <person name="Craven M.B."/>
            <person name="Radune D."/>
            <person name="Vamathevan J.J."/>
            <person name="Khouri H.M."/>
            <person name="White O."/>
            <person name="Gruber T.M."/>
            <person name="Ketchum K.A."/>
            <person name="Venter J.C."/>
            <person name="Tettelin H."/>
            <person name="Bryant D.A."/>
            <person name="Fraser C.M."/>
        </authorList>
    </citation>
    <scope>NUCLEOTIDE SEQUENCE [LARGE SCALE GENOMIC DNA]</scope>
    <source>
        <strain>ATCC 49652 / DSM 12025 / NBRC 103806 / TLS</strain>
    </source>
</reference>
<sequence length="103" mass="11767">MKNPLLRPWLTEKSTKLTEQKGQYVFQVKIDADKFDIKKAVEEKFGVDVVSIRTINCLGKSKRQYTRKGLIAGKKSDWKKAIVTLGDGQTIDYYAKPAEKSEK</sequence>
<comment type="function">
    <text evidence="1">One of the early assembly proteins it binds 23S rRNA. One of the proteins that surrounds the polypeptide exit tunnel on the outside of the ribosome. Forms the main docking site for trigger factor binding to the ribosome.</text>
</comment>
<comment type="subunit">
    <text evidence="1">Part of the 50S ribosomal subunit. Contacts protein L29, and trigger factor when it is bound to the ribosome.</text>
</comment>
<comment type="similarity">
    <text evidence="1">Belongs to the universal ribosomal protein uL23 family.</text>
</comment>
<accession>Q8KAH4</accession>
<protein>
    <recommendedName>
        <fullName evidence="1">Large ribosomal subunit protein uL23</fullName>
    </recommendedName>
    <alternativeName>
        <fullName evidence="2">50S ribosomal protein L23</fullName>
    </alternativeName>
</protein>
<proteinExistence type="inferred from homology"/>
<dbReference type="EMBL" id="AE006470">
    <property type="protein sequence ID" value="AAM73403.1"/>
    <property type="molecule type" value="Genomic_DNA"/>
</dbReference>
<dbReference type="RefSeq" id="NP_663061.1">
    <property type="nucleotide sequence ID" value="NC_002932.3"/>
</dbReference>
<dbReference type="RefSeq" id="WP_010933840.1">
    <property type="nucleotide sequence ID" value="NC_002932.3"/>
</dbReference>
<dbReference type="SMR" id="Q8KAH4"/>
<dbReference type="STRING" id="194439.CT2187"/>
<dbReference type="EnsemblBacteria" id="AAM73403">
    <property type="protein sequence ID" value="AAM73403"/>
    <property type="gene ID" value="CT2187"/>
</dbReference>
<dbReference type="KEGG" id="cte:CT2187"/>
<dbReference type="PATRIC" id="fig|194439.7.peg.1986"/>
<dbReference type="eggNOG" id="COG0089">
    <property type="taxonomic scope" value="Bacteria"/>
</dbReference>
<dbReference type="HOGENOM" id="CLU_037562_3_0_10"/>
<dbReference type="OrthoDB" id="9797862at2"/>
<dbReference type="Proteomes" id="UP000001007">
    <property type="component" value="Chromosome"/>
</dbReference>
<dbReference type="GO" id="GO:1990904">
    <property type="term" value="C:ribonucleoprotein complex"/>
    <property type="evidence" value="ECO:0007669"/>
    <property type="project" value="UniProtKB-KW"/>
</dbReference>
<dbReference type="GO" id="GO:0005840">
    <property type="term" value="C:ribosome"/>
    <property type="evidence" value="ECO:0007669"/>
    <property type="project" value="UniProtKB-KW"/>
</dbReference>
<dbReference type="GO" id="GO:0019843">
    <property type="term" value="F:rRNA binding"/>
    <property type="evidence" value="ECO:0007669"/>
    <property type="project" value="UniProtKB-UniRule"/>
</dbReference>
<dbReference type="GO" id="GO:0003735">
    <property type="term" value="F:structural constituent of ribosome"/>
    <property type="evidence" value="ECO:0007669"/>
    <property type="project" value="InterPro"/>
</dbReference>
<dbReference type="GO" id="GO:0006412">
    <property type="term" value="P:translation"/>
    <property type="evidence" value="ECO:0007669"/>
    <property type="project" value="UniProtKB-UniRule"/>
</dbReference>
<dbReference type="FunFam" id="3.30.70.330:FF:000001">
    <property type="entry name" value="50S ribosomal protein L23"/>
    <property type="match status" value="1"/>
</dbReference>
<dbReference type="Gene3D" id="3.30.70.330">
    <property type="match status" value="1"/>
</dbReference>
<dbReference type="HAMAP" id="MF_01369_B">
    <property type="entry name" value="Ribosomal_uL23_B"/>
    <property type="match status" value="1"/>
</dbReference>
<dbReference type="InterPro" id="IPR012677">
    <property type="entry name" value="Nucleotide-bd_a/b_plait_sf"/>
</dbReference>
<dbReference type="InterPro" id="IPR013025">
    <property type="entry name" value="Ribosomal_uL23-like"/>
</dbReference>
<dbReference type="InterPro" id="IPR012678">
    <property type="entry name" value="Ribosomal_uL23/eL15/eS24_sf"/>
</dbReference>
<dbReference type="NCBIfam" id="NF004363">
    <property type="entry name" value="PRK05738.2-4"/>
    <property type="match status" value="1"/>
</dbReference>
<dbReference type="PANTHER" id="PTHR11620">
    <property type="entry name" value="60S RIBOSOMAL PROTEIN L23A"/>
    <property type="match status" value="1"/>
</dbReference>
<dbReference type="Pfam" id="PF00276">
    <property type="entry name" value="Ribosomal_L23"/>
    <property type="match status" value="1"/>
</dbReference>
<dbReference type="SUPFAM" id="SSF54189">
    <property type="entry name" value="Ribosomal proteins S24e, L23 and L15e"/>
    <property type="match status" value="1"/>
</dbReference>
<gene>
    <name evidence="1" type="primary">rplW</name>
    <name type="ordered locus">CT2187</name>
</gene>
<evidence type="ECO:0000255" key="1">
    <source>
        <dbReference type="HAMAP-Rule" id="MF_01369"/>
    </source>
</evidence>
<evidence type="ECO:0000305" key="2"/>
<keyword id="KW-1185">Reference proteome</keyword>
<keyword id="KW-0687">Ribonucleoprotein</keyword>
<keyword id="KW-0689">Ribosomal protein</keyword>
<keyword id="KW-0694">RNA-binding</keyword>
<keyword id="KW-0699">rRNA-binding</keyword>
<feature type="chain" id="PRO_0000272729" description="Large ribosomal subunit protein uL23">
    <location>
        <begin position="1"/>
        <end position="103"/>
    </location>
</feature>
<name>RL23_CHLTE</name>